<organism>
    <name type="scientific">Caulobacter sp. (strain K31)</name>
    <dbReference type="NCBI Taxonomy" id="366602"/>
    <lineage>
        <taxon>Bacteria</taxon>
        <taxon>Pseudomonadati</taxon>
        <taxon>Pseudomonadota</taxon>
        <taxon>Alphaproteobacteria</taxon>
        <taxon>Caulobacterales</taxon>
        <taxon>Caulobacteraceae</taxon>
        <taxon>Caulobacter</taxon>
    </lineage>
</organism>
<proteinExistence type="inferred from homology"/>
<reference key="1">
    <citation type="submission" date="2008-01" db="EMBL/GenBank/DDBJ databases">
        <title>Complete sequence of chromosome of Caulobacter sp. K31.</title>
        <authorList>
            <consortium name="US DOE Joint Genome Institute"/>
            <person name="Copeland A."/>
            <person name="Lucas S."/>
            <person name="Lapidus A."/>
            <person name="Barry K."/>
            <person name="Glavina del Rio T."/>
            <person name="Dalin E."/>
            <person name="Tice H."/>
            <person name="Pitluck S."/>
            <person name="Bruce D."/>
            <person name="Goodwin L."/>
            <person name="Thompson L.S."/>
            <person name="Brettin T."/>
            <person name="Detter J.C."/>
            <person name="Han C."/>
            <person name="Schmutz J."/>
            <person name="Larimer F."/>
            <person name="Land M."/>
            <person name="Hauser L."/>
            <person name="Kyrpides N."/>
            <person name="Kim E."/>
            <person name="Stephens C."/>
            <person name="Richardson P."/>
        </authorList>
    </citation>
    <scope>NUCLEOTIDE SEQUENCE [LARGE SCALE GENOMIC DNA]</scope>
    <source>
        <strain>K31</strain>
    </source>
</reference>
<feature type="chain" id="PRO_1000164184" description="Protein GrpE">
    <location>
        <begin position="1"/>
        <end position="205"/>
    </location>
</feature>
<feature type="region of interest" description="Disordered" evidence="2">
    <location>
        <begin position="172"/>
        <end position="205"/>
    </location>
</feature>
<feature type="compositionally biased region" description="Low complexity" evidence="2">
    <location>
        <begin position="177"/>
        <end position="195"/>
    </location>
</feature>
<keyword id="KW-0143">Chaperone</keyword>
<keyword id="KW-0963">Cytoplasm</keyword>
<keyword id="KW-0346">Stress response</keyword>
<name>GRPE_CAUSK</name>
<sequence length="205" mass="21732">MTDEQTPAEDVAFEADDASQEIEALKLEVAALKDQALRYAAEAENTKRRAERESNDARAYAIQKFARDLLGAADNLSRATAMSPRDSQDPAVTNYIIGVEMTEKELQGAFERNGLKKIDPAKGEKFDPHLHQAVMEQPSTEVAAGGVLQVLQAGYELMGRLVRPAMVAVAAKGSTGPGAPAEPAAAPNPYASNGADTGGSFDTKA</sequence>
<dbReference type="EMBL" id="CP000927">
    <property type="protein sequence ID" value="ABZ69302.1"/>
    <property type="molecule type" value="Genomic_DNA"/>
</dbReference>
<dbReference type="SMR" id="B0T367"/>
<dbReference type="STRING" id="366602.Caul_0165"/>
<dbReference type="KEGG" id="cak:Caul_0165"/>
<dbReference type="eggNOG" id="COG0576">
    <property type="taxonomic scope" value="Bacteria"/>
</dbReference>
<dbReference type="HOGENOM" id="CLU_057217_6_2_5"/>
<dbReference type="OrthoDB" id="9789811at2"/>
<dbReference type="GO" id="GO:0005737">
    <property type="term" value="C:cytoplasm"/>
    <property type="evidence" value="ECO:0007669"/>
    <property type="project" value="UniProtKB-SubCell"/>
</dbReference>
<dbReference type="GO" id="GO:0000774">
    <property type="term" value="F:adenyl-nucleotide exchange factor activity"/>
    <property type="evidence" value="ECO:0007669"/>
    <property type="project" value="InterPro"/>
</dbReference>
<dbReference type="GO" id="GO:0042803">
    <property type="term" value="F:protein homodimerization activity"/>
    <property type="evidence" value="ECO:0007669"/>
    <property type="project" value="InterPro"/>
</dbReference>
<dbReference type="GO" id="GO:0051087">
    <property type="term" value="F:protein-folding chaperone binding"/>
    <property type="evidence" value="ECO:0007669"/>
    <property type="project" value="InterPro"/>
</dbReference>
<dbReference type="GO" id="GO:0051082">
    <property type="term" value="F:unfolded protein binding"/>
    <property type="evidence" value="ECO:0007669"/>
    <property type="project" value="TreeGrafter"/>
</dbReference>
<dbReference type="GO" id="GO:0006457">
    <property type="term" value="P:protein folding"/>
    <property type="evidence" value="ECO:0007669"/>
    <property type="project" value="InterPro"/>
</dbReference>
<dbReference type="CDD" id="cd00446">
    <property type="entry name" value="GrpE"/>
    <property type="match status" value="1"/>
</dbReference>
<dbReference type="FunFam" id="2.30.22.10:FF:000001">
    <property type="entry name" value="Protein GrpE"/>
    <property type="match status" value="1"/>
</dbReference>
<dbReference type="Gene3D" id="3.90.20.20">
    <property type="match status" value="1"/>
</dbReference>
<dbReference type="Gene3D" id="2.30.22.10">
    <property type="entry name" value="Head domain of nucleotide exchange factor GrpE"/>
    <property type="match status" value="1"/>
</dbReference>
<dbReference type="HAMAP" id="MF_01151">
    <property type="entry name" value="GrpE"/>
    <property type="match status" value="1"/>
</dbReference>
<dbReference type="InterPro" id="IPR000740">
    <property type="entry name" value="GrpE"/>
</dbReference>
<dbReference type="InterPro" id="IPR013805">
    <property type="entry name" value="GrpE_coiled_coil"/>
</dbReference>
<dbReference type="InterPro" id="IPR009012">
    <property type="entry name" value="GrpE_head"/>
</dbReference>
<dbReference type="NCBIfam" id="NF010738">
    <property type="entry name" value="PRK14140.1"/>
    <property type="match status" value="1"/>
</dbReference>
<dbReference type="NCBIfam" id="NF010752">
    <property type="entry name" value="PRK14155.1"/>
    <property type="match status" value="1"/>
</dbReference>
<dbReference type="PANTHER" id="PTHR21237">
    <property type="entry name" value="GRPE PROTEIN"/>
    <property type="match status" value="1"/>
</dbReference>
<dbReference type="PANTHER" id="PTHR21237:SF23">
    <property type="entry name" value="GRPE PROTEIN HOMOLOG, MITOCHONDRIAL"/>
    <property type="match status" value="1"/>
</dbReference>
<dbReference type="Pfam" id="PF01025">
    <property type="entry name" value="GrpE"/>
    <property type="match status" value="1"/>
</dbReference>
<dbReference type="PRINTS" id="PR00773">
    <property type="entry name" value="GRPEPROTEIN"/>
</dbReference>
<dbReference type="SUPFAM" id="SSF58014">
    <property type="entry name" value="Coiled-coil domain of nucleotide exchange factor GrpE"/>
    <property type="match status" value="1"/>
</dbReference>
<dbReference type="SUPFAM" id="SSF51064">
    <property type="entry name" value="Head domain of nucleotide exchange factor GrpE"/>
    <property type="match status" value="1"/>
</dbReference>
<dbReference type="PROSITE" id="PS01071">
    <property type="entry name" value="GRPE"/>
    <property type="match status" value="1"/>
</dbReference>
<accession>B0T367</accession>
<gene>
    <name evidence="1" type="primary">grpE</name>
    <name type="ordered locus">Caul_0165</name>
</gene>
<comment type="function">
    <text evidence="1">Participates actively in the response to hyperosmotic and heat shock by preventing the aggregation of stress-denatured proteins, in association with DnaK and GrpE. It is the nucleotide exchange factor for DnaK and may function as a thermosensor. Unfolded proteins bind initially to DnaJ; upon interaction with the DnaJ-bound protein, DnaK hydrolyzes its bound ATP, resulting in the formation of a stable complex. GrpE releases ADP from DnaK; ATP binding to DnaK triggers the release of the substrate protein, thus completing the reaction cycle. Several rounds of ATP-dependent interactions between DnaJ, DnaK and GrpE are required for fully efficient folding.</text>
</comment>
<comment type="subunit">
    <text evidence="1">Homodimer.</text>
</comment>
<comment type="subcellular location">
    <subcellularLocation>
        <location evidence="1">Cytoplasm</location>
    </subcellularLocation>
</comment>
<comment type="similarity">
    <text evidence="1">Belongs to the GrpE family.</text>
</comment>
<protein>
    <recommendedName>
        <fullName evidence="1">Protein GrpE</fullName>
    </recommendedName>
    <alternativeName>
        <fullName evidence="1">HSP-70 cofactor</fullName>
    </alternativeName>
</protein>
<evidence type="ECO:0000255" key="1">
    <source>
        <dbReference type="HAMAP-Rule" id="MF_01151"/>
    </source>
</evidence>
<evidence type="ECO:0000256" key="2">
    <source>
        <dbReference type="SAM" id="MobiDB-lite"/>
    </source>
</evidence>